<proteinExistence type="inferred from homology"/>
<reference key="1">
    <citation type="submission" date="2008-02" db="EMBL/GenBank/DDBJ databases">
        <title>Complete sequence of chromosome of Methylobacterium sp. 4-46.</title>
        <authorList>
            <consortium name="US DOE Joint Genome Institute"/>
            <person name="Copeland A."/>
            <person name="Lucas S."/>
            <person name="Lapidus A."/>
            <person name="Glavina del Rio T."/>
            <person name="Dalin E."/>
            <person name="Tice H."/>
            <person name="Bruce D."/>
            <person name="Goodwin L."/>
            <person name="Pitluck S."/>
            <person name="Chertkov O."/>
            <person name="Brettin T."/>
            <person name="Detter J.C."/>
            <person name="Han C."/>
            <person name="Kuske C.R."/>
            <person name="Schmutz J."/>
            <person name="Larimer F."/>
            <person name="Land M."/>
            <person name="Hauser L."/>
            <person name="Kyrpides N."/>
            <person name="Ivanova N."/>
            <person name="Marx C.J."/>
            <person name="Richardson P."/>
        </authorList>
    </citation>
    <scope>NUCLEOTIDE SEQUENCE [LARGE SCALE GENOMIC DNA]</scope>
    <source>
        <strain>4-46</strain>
    </source>
</reference>
<name>IF3_METS4</name>
<sequence>MPAPQKDGPRANRDIRGVREVQLIDETGQNRGVMGFFDALQVAEEAGLDLVEIAPNSTPPVCKLLDYGRYRFNEQKKQAEARKRQKTVEVKEIKLRPGIDKHDYDVKMKAVQRFFEEGDKVKVTLRFRGREMAHQDLGLRLLERVKAETQEIAKVESEPQLEGRQMIMILAPR</sequence>
<protein>
    <recommendedName>
        <fullName evidence="1">Translation initiation factor IF-3</fullName>
    </recommendedName>
</protein>
<keyword id="KW-0963">Cytoplasm</keyword>
<keyword id="KW-0396">Initiation factor</keyword>
<keyword id="KW-0648">Protein biosynthesis</keyword>
<organism>
    <name type="scientific">Methylobacterium sp. (strain 4-46)</name>
    <dbReference type="NCBI Taxonomy" id="426117"/>
    <lineage>
        <taxon>Bacteria</taxon>
        <taxon>Pseudomonadati</taxon>
        <taxon>Pseudomonadota</taxon>
        <taxon>Alphaproteobacteria</taxon>
        <taxon>Hyphomicrobiales</taxon>
        <taxon>Methylobacteriaceae</taxon>
        <taxon>Methylobacterium</taxon>
    </lineage>
</organism>
<evidence type="ECO:0000255" key="1">
    <source>
        <dbReference type="HAMAP-Rule" id="MF_00080"/>
    </source>
</evidence>
<accession>B0UP34</accession>
<gene>
    <name evidence="1" type="primary">infC</name>
    <name type="ordered locus">M446_4232</name>
</gene>
<feature type="chain" id="PRO_1000202544" description="Translation initiation factor IF-3">
    <location>
        <begin position="1"/>
        <end position="173"/>
    </location>
</feature>
<comment type="function">
    <text evidence="1">IF-3 binds to the 30S ribosomal subunit and shifts the equilibrium between 70S ribosomes and their 50S and 30S subunits in favor of the free subunits, thus enhancing the availability of 30S subunits on which protein synthesis initiation begins.</text>
</comment>
<comment type="subunit">
    <text evidence="1">Monomer.</text>
</comment>
<comment type="subcellular location">
    <subcellularLocation>
        <location evidence="1">Cytoplasm</location>
    </subcellularLocation>
</comment>
<comment type="similarity">
    <text evidence="1">Belongs to the IF-3 family.</text>
</comment>
<dbReference type="EMBL" id="CP000943">
    <property type="protein sequence ID" value="ACA18581.1"/>
    <property type="molecule type" value="Genomic_DNA"/>
</dbReference>
<dbReference type="RefSeq" id="WP_012333972.1">
    <property type="nucleotide sequence ID" value="NC_010511.1"/>
</dbReference>
<dbReference type="SMR" id="B0UP34"/>
<dbReference type="STRING" id="426117.M446_4232"/>
<dbReference type="KEGG" id="met:M446_4232"/>
<dbReference type="eggNOG" id="COG0290">
    <property type="taxonomic scope" value="Bacteria"/>
</dbReference>
<dbReference type="HOGENOM" id="CLU_054919_3_2_5"/>
<dbReference type="GO" id="GO:0005829">
    <property type="term" value="C:cytosol"/>
    <property type="evidence" value="ECO:0007669"/>
    <property type="project" value="TreeGrafter"/>
</dbReference>
<dbReference type="GO" id="GO:0016020">
    <property type="term" value="C:membrane"/>
    <property type="evidence" value="ECO:0007669"/>
    <property type="project" value="TreeGrafter"/>
</dbReference>
<dbReference type="GO" id="GO:0043022">
    <property type="term" value="F:ribosome binding"/>
    <property type="evidence" value="ECO:0007669"/>
    <property type="project" value="TreeGrafter"/>
</dbReference>
<dbReference type="GO" id="GO:0003743">
    <property type="term" value="F:translation initiation factor activity"/>
    <property type="evidence" value="ECO:0007669"/>
    <property type="project" value="UniProtKB-UniRule"/>
</dbReference>
<dbReference type="GO" id="GO:0032790">
    <property type="term" value="P:ribosome disassembly"/>
    <property type="evidence" value="ECO:0007669"/>
    <property type="project" value="TreeGrafter"/>
</dbReference>
<dbReference type="FunFam" id="3.30.110.10:FF:000001">
    <property type="entry name" value="Translation initiation factor IF-3"/>
    <property type="match status" value="1"/>
</dbReference>
<dbReference type="Gene3D" id="3.30.110.10">
    <property type="entry name" value="Translation initiation factor 3 (IF-3), C-terminal domain"/>
    <property type="match status" value="1"/>
</dbReference>
<dbReference type="Gene3D" id="3.10.20.80">
    <property type="entry name" value="Translation initiation factor 3 (IF-3), N-terminal domain"/>
    <property type="match status" value="1"/>
</dbReference>
<dbReference type="HAMAP" id="MF_00080">
    <property type="entry name" value="IF_3"/>
    <property type="match status" value="1"/>
</dbReference>
<dbReference type="InterPro" id="IPR036788">
    <property type="entry name" value="T_IF-3_C_sf"/>
</dbReference>
<dbReference type="InterPro" id="IPR036787">
    <property type="entry name" value="T_IF-3_N_sf"/>
</dbReference>
<dbReference type="InterPro" id="IPR001288">
    <property type="entry name" value="Translation_initiation_fac_3"/>
</dbReference>
<dbReference type="InterPro" id="IPR019815">
    <property type="entry name" value="Translation_initiation_fac_3_C"/>
</dbReference>
<dbReference type="InterPro" id="IPR019814">
    <property type="entry name" value="Translation_initiation_fac_3_N"/>
</dbReference>
<dbReference type="NCBIfam" id="TIGR00168">
    <property type="entry name" value="infC"/>
    <property type="match status" value="1"/>
</dbReference>
<dbReference type="PANTHER" id="PTHR10938">
    <property type="entry name" value="TRANSLATION INITIATION FACTOR IF-3"/>
    <property type="match status" value="1"/>
</dbReference>
<dbReference type="PANTHER" id="PTHR10938:SF0">
    <property type="entry name" value="TRANSLATION INITIATION FACTOR IF-3, MITOCHONDRIAL"/>
    <property type="match status" value="1"/>
</dbReference>
<dbReference type="Pfam" id="PF00707">
    <property type="entry name" value="IF3_C"/>
    <property type="match status" value="1"/>
</dbReference>
<dbReference type="Pfam" id="PF05198">
    <property type="entry name" value="IF3_N"/>
    <property type="match status" value="1"/>
</dbReference>
<dbReference type="SUPFAM" id="SSF55200">
    <property type="entry name" value="Translation initiation factor IF3, C-terminal domain"/>
    <property type="match status" value="1"/>
</dbReference>
<dbReference type="SUPFAM" id="SSF54364">
    <property type="entry name" value="Translation initiation factor IF3, N-terminal domain"/>
    <property type="match status" value="1"/>
</dbReference>